<reference key="1">
    <citation type="journal article" date="2003" name="Nature">
        <title>The genome of a motile marine Synechococcus.</title>
        <authorList>
            <person name="Palenik B."/>
            <person name="Brahamsha B."/>
            <person name="Larimer F.W."/>
            <person name="Land M.L."/>
            <person name="Hauser L."/>
            <person name="Chain P."/>
            <person name="Lamerdin J.E."/>
            <person name="Regala W."/>
            <person name="Allen E.E."/>
            <person name="McCarren J."/>
            <person name="Paulsen I.T."/>
            <person name="Dufresne A."/>
            <person name="Partensky F."/>
            <person name="Webb E.A."/>
            <person name="Waterbury J."/>
        </authorList>
    </citation>
    <scope>NUCLEOTIDE SEQUENCE [LARGE SCALE GENOMIC DNA]</scope>
    <source>
        <strain>WH8102</strain>
    </source>
</reference>
<gene>
    <name evidence="1" type="primary">aspS</name>
    <name type="ordered locus">SYNW2426</name>
</gene>
<proteinExistence type="inferred from homology"/>
<accession>Q7U3K6</accession>
<comment type="function">
    <text evidence="1">Aspartyl-tRNA synthetase with relaxed tRNA specificity since it is able to aspartylate not only its cognate tRNA(Asp) but also tRNA(Asn). Reaction proceeds in two steps: L-aspartate is first activated by ATP to form Asp-AMP and then transferred to the acceptor end of tRNA(Asp/Asn).</text>
</comment>
<comment type="catalytic activity">
    <reaction evidence="1">
        <text>tRNA(Asx) + L-aspartate + ATP = L-aspartyl-tRNA(Asx) + AMP + diphosphate</text>
        <dbReference type="Rhea" id="RHEA:18349"/>
        <dbReference type="Rhea" id="RHEA-COMP:9710"/>
        <dbReference type="Rhea" id="RHEA-COMP:9711"/>
        <dbReference type="ChEBI" id="CHEBI:29991"/>
        <dbReference type="ChEBI" id="CHEBI:30616"/>
        <dbReference type="ChEBI" id="CHEBI:33019"/>
        <dbReference type="ChEBI" id="CHEBI:78442"/>
        <dbReference type="ChEBI" id="CHEBI:78516"/>
        <dbReference type="ChEBI" id="CHEBI:456215"/>
        <dbReference type="EC" id="6.1.1.23"/>
    </reaction>
</comment>
<comment type="subunit">
    <text evidence="1">Homodimer.</text>
</comment>
<comment type="subcellular location">
    <subcellularLocation>
        <location evidence="1">Cytoplasm</location>
    </subcellularLocation>
</comment>
<comment type="similarity">
    <text evidence="1">Belongs to the class-II aminoacyl-tRNA synthetase family. Type 1 subfamily.</text>
</comment>
<name>SYDND_PARMW</name>
<sequence>MRSNGCGDLREQNIDQQVQLCGWVDRRRDHGGVIFIDLRDRSGTVQIKVDPDLGAEAFAVAEHLRSETVLQVAGKVRARPGESLNDKLATGAVEVLASGIIVLNNVKGNLPFPVSVHDEENTREELRLRHRYLDLRRKRMNDNLRLRAQTIQAARRFLEDEGFIEVETPVLTRSTPEGARDYVLPSRVCGGEWFALPQSPQLFKQLLMVGGIERYYQVARCFRDEDLRADRQPEFTQLDIEMSFMDQEEILQLNESLICSIWKAVKGIDLPRPFPRMTWHDAMERYGTDRPDTRYGMELTNVSDIVKDMGFKVFSGAVKSGGAVKCIAVPGGNDALSNVRIKPGGDVFSEAQKAGAGGLAFIRVRNGCEIDSIGAIKDNLSDEQKQELLSRTGAEPGTLLLFGAGDTATVNKALDRVRQYLAKELGMVKADQDNDQWNFLWVVDFPMFEFNSEENRYEALHHPFCAPNAEDLSSDASQWADTLPGARAQAYDLVLNGLELGGGSLRIHDSALQRQVLQTVGLPLEEAQEQFGFLMDALDVGAPPHGGLAFGVDRMVMLLAGEESIRDTIAFPKTQQARCLMTNAPGGVADKQLEELHVASTWVDPSGEDD</sequence>
<protein>
    <recommendedName>
        <fullName evidence="1">Aspartate--tRNA(Asp/Asn) ligase</fullName>
        <ecNumber evidence="1">6.1.1.23</ecNumber>
    </recommendedName>
    <alternativeName>
        <fullName evidence="1">Aspartyl-tRNA synthetase</fullName>
        <shortName evidence="1">AspRS</shortName>
    </alternativeName>
    <alternativeName>
        <fullName evidence="1">Non-discriminating aspartyl-tRNA synthetase</fullName>
        <shortName evidence="1">ND-AspRS</shortName>
    </alternativeName>
</protein>
<keyword id="KW-0030">Aminoacyl-tRNA synthetase</keyword>
<keyword id="KW-0067">ATP-binding</keyword>
<keyword id="KW-0963">Cytoplasm</keyword>
<keyword id="KW-0436">Ligase</keyword>
<keyword id="KW-0547">Nucleotide-binding</keyword>
<keyword id="KW-0648">Protein biosynthesis</keyword>
<organism>
    <name type="scientific">Parasynechococcus marenigrum (strain WH8102)</name>
    <dbReference type="NCBI Taxonomy" id="84588"/>
    <lineage>
        <taxon>Bacteria</taxon>
        <taxon>Bacillati</taxon>
        <taxon>Cyanobacteriota</taxon>
        <taxon>Cyanophyceae</taxon>
        <taxon>Synechococcales</taxon>
        <taxon>Prochlorococcaceae</taxon>
        <taxon>Parasynechococcus</taxon>
        <taxon>Parasynechococcus marenigrum</taxon>
    </lineage>
</organism>
<dbReference type="EC" id="6.1.1.23" evidence="1"/>
<dbReference type="EMBL" id="BX569695">
    <property type="protein sequence ID" value="CAE08941.1"/>
    <property type="molecule type" value="Genomic_DNA"/>
</dbReference>
<dbReference type="RefSeq" id="WP_011129279.1">
    <property type="nucleotide sequence ID" value="NC_005070.1"/>
</dbReference>
<dbReference type="SMR" id="Q7U3K6"/>
<dbReference type="STRING" id="84588.SYNW2426"/>
<dbReference type="KEGG" id="syw:SYNW2426"/>
<dbReference type="eggNOG" id="COG0173">
    <property type="taxonomic scope" value="Bacteria"/>
</dbReference>
<dbReference type="HOGENOM" id="CLU_014330_3_2_3"/>
<dbReference type="Proteomes" id="UP000001422">
    <property type="component" value="Chromosome"/>
</dbReference>
<dbReference type="GO" id="GO:0005737">
    <property type="term" value="C:cytoplasm"/>
    <property type="evidence" value="ECO:0007669"/>
    <property type="project" value="UniProtKB-SubCell"/>
</dbReference>
<dbReference type="GO" id="GO:0004815">
    <property type="term" value="F:aspartate-tRNA ligase activity"/>
    <property type="evidence" value="ECO:0007669"/>
    <property type="project" value="UniProtKB-UniRule"/>
</dbReference>
<dbReference type="GO" id="GO:0050560">
    <property type="term" value="F:aspartate-tRNA(Asn) ligase activity"/>
    <property type="evidence" value="ECO:0007669"/>
    <property type="project" value="UniProtKB-EC"/>
</dbReference>
<dbReference type="GO" id="GO:0005524">
    <property type="term" value="F:ATP binding"/>
    <property type="evidence" value="ECO:0007669"/>
    <property type="project" value="UniProtKB-UniRule"/>
</dbReference>
<dbReference type="GO" id="GO:0003676">
    <property type="term" value="F:nucleic acid binding"/>
    <property type="evidence" value="ECO:0007669"/>
    <property type="project" value="InterPro"/>
</dbReference>
<dbReference type="GO" id="GO:0006422">
    <property type="term" value="P:aspartyl-tRNA aminoacylation"/>
    <property type="evidence" value="ECO:0007669"/>
    <property type="project" value="UniProtKB-UniRule"/>
</dbReference>
<dbReference type="CDD" id="cd00777">
    <property type="entry name" value="AspRS_core"/>
    <property type="match status" value="1"/>
</dbReference>
<dbReference type="CDD" id="cd04317">
    <property type="entry name" value="EcAspRS_like_N"/>
    <property type="match status" value="1"/>
</dbReference>
<dbReference type="Gene3D" id="3.30.930.10">
    <property type="entry name" value="Bira Bifunctional Protein, Domain 2"/>
    <property type="match status" value="1"/>
</dbReference>
<dbReference type="Gene3D" id="3.30.1360.30">
    <property type="entry name" value="GAD-like domain"/>
    <property type="match status" value="1"/>
</dbReference>
<dbReference type="Gene3D" id="2.40.50.140">
    <property type="entry name" value="Nucleic acid-binding proteins"/>
    <property type="match status" value="1"/>
</dbReference>
<dbReference type="HAMAP" id="MF_00044">
    <property type="entry name" value="Asp_tRNA_synth_type1"/>
    <property type="match status" value="1"/>
</dbReference>
<dbReference type="InterPro" id="IPR004364">
    <property type="entry name" value="Aa-tRNA-synt_II"/>
</dbReference>
<dbReference type="InterPro" id="IPR006195">
    <property type="entry name" value="aa-tRNA-synth_II"/>
</dbReference>
<dbReference type="InterPro" id="IPR045864">
    <property type="entry name" value="aa-tRNA-synth_II/BPL/LPL"/>
</dbReference>
<dbReference type="InterPro" id="IPR004524">
    <property type="entry name" value="Asp-tRNA-ligase_1"/>
</dbReference>
<dbReference type="InterPro" id="IPR047089">
    <property type="entry name" value="Asp-tRNA-ligase_1_N"/>
</dbReference>
<dbReference type="InterPro" id="IPR002312">
    <property type="entry name" value="Asp/Asn-tRNA-synth_IIb"/>
</dbReference>
<dbReference type="InterPro" id="IPR047090">
    <property type="entry name" value="AspRS_core"/>
</dbReference>
<dbReference type="InterPro" id="IPR004115">
    <property type="entry name" value="GAD-like_sf"/>
</dbReference>
<dbReference type="InterPro" id="IPR029351">
    <property type="entry name" value="GAD_dom"/>
</dbReference>
<dbReference type="InterPro" id="IPR012340">
    <property type="entry name" value="NA-bd_OB-fold"/>
</dbReference>
<dbReference type="InterPro" id="IPR004365">
    <property type="entry name" value="NA-bd_OB_tRNA"/>
</dbReference>
<dbReference type="NCBIfam" id="TIGR00459">
    <property type="entry name" value="aspS_bact"/>
    <property type="match status" value="1"/>
</dbReference>
<dbReference type="NCBIfam" id="NF001750">
    <property type="entry name" value="PRK00476.1"/>
    <property type="match status" value="1"/>
</dbReference>
<dbReference type="PANTHER" id="PTHR22594:SF5">
    <property type="entry name" value="ASPARTATE--TRNA LIGASE, MITOCHONDRIAL"/>
    <property type="match status" value="1"/>
</dbReference>
<dbReference type="PANTHER" id="PTHR22594">
    <property type="entry name" value="ASPARTYL/LYSYL-TRNA SYNTHETASE"/>
    <property type="match status" value="1"/>
</dbReference>
<dbReference type="Pfam" id="PF02938">
    <property type="entry name" value="GAD"/>
    <property type="match status" value="1"/>
</dbReference>
<dbReference type="Pfam" id="PF00152">
    <property type="entry name" value="tRNA-synt_2"/>
    <property type="match status" value="1"/>
</dbReference>
<dbReference type="Pfam" id="PF01336">
    <property type="entry name" value="tRNA_anti-codon"/>
    <property type="match status" value="1"/>
</dbReference>
<dbReference type="PRINTS" id="PR01042">
    <property type="entry name" value="TRNASYNTHASP"/>
</dbReference>
<dbReference type="SUPFAM" id="SSF55681">
    <property type="entry name" value="Class II aaRS and biotin synthetases"/>
    <property type="match status" value="1"/>
</dbReference>
<dbReference type="SUPFAM" id="SSF55261">
    <property type="entry name" value="GAD domain-like"/>
    <property type="match status" value="1"/>
</dbReference>
<dbReference type="SUPFAM" id="SSF50249">
    <property type="entry name" value="Nucleic acid-binding proteins"/>
    <property type="match status" value="1"/>
</dbReference>
<dbReference type="PROSITE" id="PS50862">
    <property type="entry name" value="AA_TRNA_LIGASE_II"/>
    <property type="match status" value="1"/>
</dbReference>
<feature type="chain" id="PRO_0000110966" description="Aspartate--tRNA(Asp/Asn) ligase">
    <location>
        <begin position="1"/>
        <end position="610"/>
    </location>
</feature>
<feature type="region of interest" description="Aspartate" evidence="1">
    <location>
        <begin position="201"/>
        <end position="204"/>
    </location>
</feature>
<feature type="binding site" evidence="1">
    <location>
        <position position="177"/>
    </location>
    <ligand>
        <name>L-aspartate</name>
        <dbReference type="ChEBI" id="CHEBI:29991"/>
    </ligand>
</feature>
<feature type="binding site" evidence="1">
    <location>
        <begin position="223"/>
        <end position="225"/>
    </location>
    <ligand>
        <name>ATP</name>
        <dbReference type="ChEBI" id="CHEBI:30616"/>
    </ligand>
</feature>
<feature type="binding site" evidence="1">
    <location>
        <position position="223"/>
    </location>
    <ligand>
        <name>L-aspartate</name>
        <dbReference type="ChEBI" id="CHEBI:29991"/>
    </ligand>
</feature>
<feature type="binding site" evidence="1">
    <location>
        <position position="232"/>
    </location>
    <ligand>
        <name>ATP</name>
        <dbReference type="ChEBI" id="CHEBI:30616"/>
    </ligand>
</feature>
<feature type="binding site" evidence="1">
    <location>
        <position position="461"/>
    </location>
    <ligand>
        <name>L-aspartate</name>
        <dbReference type="ChEBI" id="CHEBI:29991"/>
    </ligand>
</feature>
<feature type="binding site" evidence="1">
    <location>
        <position position="499"/>
    </location>
    <ligand>
        <name>ATP</name>
        <dbReference type="ChEBI" id="CHEBI:30616"/>
    </ligand>
</feature>
<feature type="binding site" evidence="1">
    <location>
        <position position="506"/>
    </location>
    <ligand>
        <name>L-aspartate</name>
        <dbReference type="ChEBI" id="CHEBI:29991"/>
    </ligand>
</feature>
<feature type="binding site" evidence="1">
    <location>
        <begin position="551"/>
        <end position="554"/>
    </location>
    <ligand>
        <name>ATP</name>
        <dbReference type="ChEBI" id="CHEBI:30616"/>
    </ligand>
</feature>
<feature type="site" description="Important for tRNA non-discrimination" evidence="1">
    <location>
        <position position="30"/>
    </location>
</feature>
<evidence type="ECO:0000255" key="1">
    <source>
        <dbReference type="HAMAP-Rule" id="MF_00044"/>
    </source>
</evidence>